<proteinExistence type="evidence at protein level"/>
<evidence type="ECO:0000256" key="1">
    <source>
        <dbReference type="SAM" id="MobiDB-lite"/>
    </source>
</evidence>
<evidence type="ECO:0000269" key="2">
    <source>
    </source>
</evidence>
<evidence type="ECO:0000269" key="3">
    <source>
    </source>
</evidence>
<evidence type="ECO:0000269" key="4">
    <source>
    </source>
</evidence>
<evidence type="ECO:0000269" key="5">
    <source>
    </source>
</evidence>
<evidence type="ECO:0000269" key="6">
    <source>
    </source>
</evidence>
<evidence type="ECO:0000269" key="7">
    <source>
    </source>
</evidence>
<evidence type="ECO:0000269" key="8">
    <source>
    </source>
</evidence>
<evidence type="ECO:0000269" key="9">
    <source>
    </source>
</evidence>
<evidence type="ECO:0000269" key="10">
    <source>
    </source>
</evidence>
<evidence type="ECO:0000269" key="11">
    <source>
    </source>
</evidence>
<evidence type="ECO:0000269" key="12">
    <source>
    </source>
</evidence>
<evidence type="ECO:0000269" key="13">
    <source>
    </source>
</evidence>
<evidence type="ECO:0000269" key="14">
    <source>
    </source>
</evidence>
<evidence type="ECO:0000269" key="15">
    <source>
    </source>
</evidence>
<evidence type="ECO:0000269" key="16">
    <source>
    </source>
</evidence>
<evidence type="ECO:0000269" key="17">
    <source>
    </source>
</evidence>
<evidence type="ECO:0000269" key="18">
    <source>
    </source>
</evidence>
<evidence type="ECO:0000269" key="19">
    <source>
    </source>
</evidence>
<evidence type="ECO:0000269" key="20">
    <source>
    </source>
</evidence>
<evidence type="ECO:0000269" key="21">
    <source>
    </source>
</evidence>
<evidence type="ECO:0000269" key="22">
    <source>
    </source>
</evidence>
<evidence type="ECO:0000269" key="23">
    <source>
    </source>
</evidence>
<evidence type="ECO:0000269" key="24">
    <source>
    </source>
</evidence>
<evidence type="ECO:0000305" key="25"/>
<evidence type="ECO:0007829" key="26">
    <source>
        <dbReference type="PDB" id="1Q67"/>
    </source>
</evidence>
<evidence type="ECO:0007829" key="27">
    <source>
        <dbReference type="PDB" id="6Y3Z"/>
    </source>
</evidence>
<reference key="1">
    <citation type="journal article" date="1995" name="Yeast">
        <title>DNA sequence analysis of a 13 kbp fragment of the left arm of yeast chromosome XV containing seven new open reading frames.</title>
        <authorList>
            <person name="Casamayor A."/>
            <person name="Aldea M."/>
            <person name="Casas C."/>
            <person name="Herrero E."/>
            <person name="Gamo F.-J."/>
            <person name="Lafuente M.J."/>
            <person name="Gancedo C."/>
            <person name="Arino J."/>
        </authorList>
    </citation>
    <scope>NUCLEOTIDE SEQUENCE [GENOMIC DNA]</scope>
    <source>
        <strain>ATCC 96604 / S288c / FY1679</strain>
    </source>
</reference>
<reference key="2">
    <citation type="journal article" date="1997" name="Nature">
        <title>The nucleotide sequence of Saccharomyces cerevisiae chromosome XV.</title>
        <authorList>
            <person name="Dujon B."/>
            <person name="Albermann K."/>
            <person name="Aldea M."/>
            <person name="Alexandraki D."/>
            <person name="Ansorge W."/>
            <person name="Arino J."/>
            <person name="Benes V."/>
            <person name="Bohn C."/>
            <person name="Bolotin-Fukuhara M."/>
            <person name="Bordonne R."/>
            <person name="Boyer J."/>
            <person name="Camasses A."/>
            <person name="Casamayor A."/>
            <person name="Casas C."/>
            <person name="Cheret G."/>
            <person name="Cziepluch C."/>
            <person name="Daignan-Fornier B."/>
            <person name="Dang V.-D."/>
            <person name="de Haan M."/>
            <person name="Delius H."/>
            <person name="Durand P."/>
            <person name="Fairhead C."/>
            <person name="Feldmann H."/>
            <person name="Gaillon L."/>
            <person name="Galisson F."/>
            <person name="Gamo F.-J."/>
            <person name="Gancedo C."/>
            <person name="Goffeau A."/>
            <person name="Goulding S.E."/>
            <person name="Grivell L.A."/>
            <person name="Habbig B."/>
            <person name="Hand N.J."/>
            <person name="Hani J."/>
            <person name="Hattenhorst U."/>
            <person name="Hebling U."/>
            <person name="Hernando Y."/>
            <person name="Herrero E."/>
            <person name="Heumann K."/>
            <person name="Hiesel R."/>
            <person name="Hilger F."/>
            <person name="Hofmann B."/>
            <person name="Hollenberg C.P."/>
            <person name="Hughes B."/>
            <person name="Jauniaux J.-C."/>
            <person name="Kalogeropoulos A."/>
            <person name="Katsoulou C."/>
            <person name="Kordes E."/>
            <person name="Lafuente M.J."/>
            <person name="Landt O."/>
            <person name="Louis E.J."/>
            <person name="Maarse A.C."/>
            <person name="Madania A."/>
            <person name="Mannhaupt G."/>
            <person name="Marck C."/>
            <person name="Martin R.P."/>
            <person name="Mewes H.-W."/>
            <person name="Michaux G."/>
            <person name="Paces V."/>
            <person name="Parle-McDermott A.G."/>
            <person name="Pearson B.M."/>
            <person name="Perrin A."/>
            <person name="Pettersson B."/>
            <person name="Poch O."/>
            <person name="Pohl T.M."/>
            <person name="Poirey R."/>
            <person name="Portetelle D."/>
            <person name="Pujol A."/>
            <person name="Purnelle B."/>
            <person name="Ramezani Rad M."/>
            <person name="Rechmann S."/>
            <person name="Schwager C."/>
            <person name="Schweizer M."/>
            <person name="Sor F."/>
            <person name="Sterky F."/>
            <person name="Tarassov I.A."/>
            <person name="Teodoru C."/>
            <person name="Tettelin H."/>
            <person name="Thierry A."/>
            <person name="Tobiasch E."/>
            <person name="Tzermia M."/>
            <person name="Uhlen M."/>
            <person name="Unseld M."/>
            <person name="Valens M."/>
            <person name="Vandenbol M."/>
            <person name="Vetter I."/>
            <person name="Vlcek C."/>
            <person name="Voet M."/>
            <person name="Volckaert G."/>
            <person name="Voss H."/>
            <person name="Wambutt R."/>
            <person name="Wedler H."/>
            <person name="Wiemann S."/>
            <person name="Winsor B."/>
            <person name="Wolfe K.H."/>
            <person name="Zollner A."/>
            <person name="Zumstein E."/>
            <person name="Kleine K."/>
        </authorList>
    </citation>
    <scope>NUCLEOTIDE SEQUENCE [LARGE SCALE GENOMIC DNA]</scope>
    <source>
        <strain>ATCC 204508 / S288c</strain>
    </source>
</reference>
<reference key="3">
    <citation type="journal article" date="2014" name="G3 (Bethesda)">
        <title>The reference genome sequence of Saccharomyces cerevisiae: Then and now.</title>
        <authorList>
            <person name="Engel S.R."/>
            <person name="Dietrich F.S."/>
            <person name="Fisk D.G."/>
            <person name="Binkley G."/>
            <person name="Balakrishnan R."/>
            <person name="Costanzo M.C."/>
            <person name="Dwight S.S."/>
            <person name="Hitz B.C."/>
            <person name="Karra K."/>
            <person name="Nash R.S."/>
            <person name="Weng S."/>
            <person name="Wong E.D."/>
            <person name="Lloyd P."/>
            <person name="Skrzypek M.S."/>
            <person name="Miyasato S.R."/>
            <person name="Simison M."/>
            <person name="Cherry J.M."/>
        </authorList>
    </citation>
    <scope>GENOME REANNOTATION</scope>
    <source>
        <strain>ATCC 204508 / S288c</strain>
    </source>
</reference>
<reference key="4">
    <citation type="journal article" date="2007" name="Genome Res.">
        <title>Approaching a complete repository of sequence-verified protein-encoding clones for Saccharomyces cerevisiae.</title>
        <authorList>
            <person name="Hu Y."/>
            <person name="Rolfs A."/>
            <person name="Bhullar B."/>
            <person name="Murthy T.V.S."/>
            <person name="Zhu C."/>
            <person name="Berger M.F."/>
            <person name="Camargo A.A."/>
            <person name="Kelley F."/>
            <person name="McCarron S."/>
            <person name="Jepson D."/>
            <person name="Richardson A."/>
            <person name="Raphael J."/>
            <person name="Moreira D."/>
            <person name="Taycher E."/>
            <person name="Zuo D."/>
            <person name="Mohr S."/>
            <person name="Kane M.F."/>
            <person name="Williamson J."/>
            <person name="Simpson A.J.G."/>
            <person name="Bulyk M.L."/>
            <person name="Harlow E."/>
            <person name="Marsischky G."/>
            <person name="Kolodner R.D."/>
            <person name="LaBaer J."/>
        </authorList>
    </citation>
    <scope>NUCLEOTIDE SEQUENCE [GENOMIC DNA]</scope>
    <source>
        <strain>ATCC 204508 / S288c</strain>
    </source>
</reference>
<reference key="5">
    <citation type="journal article" date="1996" name="Nature">
        <title>An essential component of the decapping enzyme required for normal rates of mRNA turnover.</title>
        <authorList>
            <person name="Beelman C.A."/>
            <person name="Stevens A."/>
            <person name="Caponigro G."/>
            <person name="LaGrandeur T.E."/>
            <person name="Hatfield L."/>
            <person name="Fortner D.M."/>
            <person name="Parker R."/>
        </authorList>
    </citation>
    <scope>PROTEIN SEQUENCE OF 1-14</scope>
    <scope>FUNCTION</scope>
    <scope>MUTAGENESIS OF TRP-56</scope>
</reference>
<reference key="6">
    <citation type="journal article" date="1996" name="Mol. Cell. Biol.">
        <title>Mutations in trans-acting factors affecting mRNA decapping in Saccharomyces cerevisiae.</title>
        <authorList>
            <person name="Hatfield L."/>
            <person name="Beelman C.A."/>
            <person name="Stevens A."/>
            <person name="Parker R."/>
        </authorList>
    </citation>
    <scope>FUNCTION</scope>
</reference>
<reference key="7">
    <citation type="journal article" date="1998" name="EMBO J.">
        <title>Isolation and characterization of Dcp1p, the yeast mRNA decapping enzyme.</title>
        <authorList>
            <person name="LaGrandeur T.E."/>
            <person name="Parker R."/>
        </authorList>
    </citation>
    <scope>FUNCTION</scope>
    <scope>PHOSPHORYLATION</scope>
</reference>
<reference key="8">
    <citation type="journal article" date="1998" name="EMBO J.">
        <title>The 3' to 5' degradation of yeast mRNAs is a general mechanism for mRNA turnover that requires the SKI2 DEVH box protein and 3' to 5' exonucleases of the exosome complex.</title>
        <authorList>
            <person name="Anderson J.S.J."/>
            <person name="Parker R.P."/>
        </authorList>
    </citation>
    <scope>FUNCTION</scope>
</reference>
<reference key="9">
    <citation type="journal article" date="1999" name="EMBO J.">
        <title>The DCP2 protein is required for mRNA decapping in Saccharomyces cerevisiae and contains a functional MutT motif.</title>
        <authorList>
            <person name="Dunckley T."/>
            <person name="Parker R."/>
        </authorList>
    </citation>
    <scope>FUNCTION</scope>
    <scope>INTERACTION WITH DCP2</scope>
</reference>
<reference key="10">
    <citation type="journal article" date="1999" name="Genetics">
        <title>Analysis of mutations in the yeast mRNA decapping enzyme.</title>
        <authorList>
            <person name="Tharun S."/>
            <person name="Parker R."/>
        </authorList>
    </citation>
    <scope>FUNCTION</scope>
    <scope>MUTAGENESIS OF 16-GLU--LYS-20; 29-ARG--ASP-31; TYR-47; 48-LYS--ASP-50; TRP-56; ARG-70; GLY-156; 187-LYS-ASP-188; TRP-204 AND 216-GLU--LYS-219</scope>
</reference>
<reference key="11">
    <citation type="journal article" date="1999" name="Methods">
        <title>Monitoring mRNA decapping activity.</title>
        <authorList>
            <person name="Zhang S."/>
            <person name="Williams C.J."/>
            <person name="Wormington M."/>
            <person name="Stevens A."/>
            <person name="Peltz S.W."/>
        </authorList>
    </citation>
    <scope>FUNCTION</scope>
</reference>
<reference key="12">
    <citation type="journal article" date="1999" name="Mol. Biol. Cell">
        <title>Recognition of yeast mRNAs as 'nonsense containing' leads to both inhibition of mRNA translation and mRNA degradation: implications for the control of mRNA decapping.</title>
        <authorList>
            <person name="Muhlrad D."/>
            <person name="Parker R."/>
        </authorList>
    </citation>
    <scope>FUNCTION</scope>
</reference>
<reference key="13">
    <citation type="journal article" date="1999" name="Mol. Cell. Biol.">
        <title>Mutations in translation initiation factors lead to increased rates of deadenylation and decapping of mRNAs in Saccharomyces cerevisiae.</title>
        <authorList>
            <person name="Schwartz D.C."/>
            <person name="Parker R."/>
        </authorList>
    </citation>
    <scope>FUNCTION</scope>
</reference>
<reference key="14">
    <citation type="journal article" date="2000" name="EMBO J.">
        <title>The eukaryotic mRNA decapping protein Dcp1 interacts physically and functionally with the eIF4F translation initiation complex.</title>
        <authorList>
            <person name="Vilela C."/>
            <person name="Velasco C."/>
            <person name="Ptushkina M."/>
            <person name="McCarthy J.E.G."/>
        </authorList>
    </citation>
    <scope>FUNCTION</scope>
    <scope>INTERACTION WITH PAB1 AND TIF4632</scope>
</reference>
<reference key="15">
    <citation type="journal article" date="2000" name="Nature">
        <title>Yeast Sm-like proteins function in mRNA decapping and decay.</title>
        <authorList>
            <person name="Tharun S."/>
            <person name="He W."/>
            <person name="Mayes A.E."/>
            <person name="Lennertz P."/>
            <person name="Beggs J.D."/>
            <person name="Parker R."/>
        </authorList>
    </citation>
    <scope>INTERACTION WITH LSM1; LSM2; LSM3; LSM4; LSM5; LSM6 AND LSM7</scope>
    <scope>SUBCELLULAR LOCATION</scope>
</reference>
<reference key="16">
    <citation type="journal article" date="2000" name="Yeast">
        <title>Genome-wide protein interaction screens reveal functional networks involving Sm-like proteins.</title>
        <authorList>
            <person name="Fromont-Racine M."/>
            <person name="Mayes A.E."/>
            <person name="Brunet-Simon A."/>
            <person name="Rain J.-C."/>
            <person name="Colley A."/>
            <person name="Dix I."/>
            <person name="Decourty L."/>
            <person name="Joly N."/>
            <person name="Ricard F."/>
            <person name="Beggs J.D."/>
            <person name="Legrain P."/>
        </authorList>
    </citation>
    <scope>INTERACTION WITH LSM4</scope>
</reference>
<reference key="17">
    <citation type="journal article" date="2001" name="Genetics">
        <title>Two related proteins, Edc1p and Edc2p, stimulate mRNA decapping in Saccharomyces cerevisiae.</title>
        <authorList>
            <person name="Dunckley T."/>
            <person name="Tucker M."/>
            <person name="Parker R."/>
        </authorList>
    </citation>
    <scope>FUNCTION</scope>
    <scope>INTERACTION WITH EDC1</scope>
</reference>
<reference key="18">
    <citation type="journal article" date="2001" name="Mol. Cell">
        <title>Targeting an mRNA for decapping: displacement of translation factors and association of the Lsm1p-7p complex on deadenylated yeast mRNAs.</title>
        <authorList>
            <person name="Tharun S."/>
            <person name="Parker R."/>
        </authorList>
    </citation>
    <scope>INTERACTION WITH MRNA</scope>
    <scope>FUNCTION OF THE DCP1-DCP2 COMPLEX</scope>
</reference>
<reference key="19">
    <citation type="journal article" date="2001" name="RNA">
        <title>The DEAD box helicase, Dhh1p, functions in mRNA decapping and interacts with both the decapping and deadenylase complexes.</title>
        <authorList>
            <person name="Coller J.M."/>
            <person name="Tucker M."/>
            <person name="Sheth U."/>
            <person name="Valencia-Sanchez M.A."/>
            <person name="Parker R."/>
        </authorList>
    </citation>
    <scope>INTERACTION WITH DHH1</scope>
</reference>
<reference key="20">
    <citation type="journal article" date="2002" name="EMBO J.">
        <title>The DEAD box protein Dhh1 stimulates the decapping enzyme Dcp1.</title>
        <authorList>
            <person name="Fischer N."/>
            <person name="Weis K."/>
        </authorList>
    </citation>
    <scope>FUNCTION</scope>
    <scope>ACTIVATION BY DHH1</scope>
</reference>
<reference key="21">
    <citation type="journal article" date="2002" name="J. Mol. Biol.">
        <title>Modulation of eukaryotic mRNA stability via the cap-binding translation complex eIF4F.</title>
        <authorList>
            <person name="Ramirez C.V."/>
            <person name="Vilela C."/>
            <person name="Berthelot K."/>
            <person name="McCarthy J.E.G."/>
        </authorList>
    </citation>
    <scope>FUNCTION</scope>
</reference>
<reference key="22">
    <citation type="journal article" date="2003" name="Nature">
        <title>Global analysis of protein localization in budding yeast.</title>
        <authorList>
            <person name="Huh W.-K."/>
            <person name="Falvo J.V."/>
            <person name="Gerke L.C."/>
            <person name="Carroll A.S."/>
            <person name="Howson R.W."/>
            <person name="Weissman J.S."/>
            <person name="O'Shea E.K."/>
        </authorList>
    </citation>
    <scope>SUBCELLULAR LOCATION [LARGE SCALE ANALYSIS]</scope>
</reference>
<reference key="23">
    <citation type="journal article" date="2003" name="Nature">
        <title>Global analysis of protein expression in yeast.</title>
        <authorList>
            <person name="Ghaemmaghami S."/>
            <person name="Huh W.-K."/>
            <person name="Bower K."/>
            <person name="Howson R.W."/>
            <person name="Belle A."/>
            <person name="Dephoure N."/>
            <person name="O'Shea E.K."/>
            <person name="Weissman J.S."/>
        </authorList>
    </citation>
    <scope>LEVEL OF PROTEIN EXPRESSION [LARGE SCALE ANALYSIS]</scope>
</reference>
<reference key="24">
    <citation type="journal article" date="2003" name="RNA">
        <title>Analysis of recombinant yeast decapping enzyme.</title>
        <authorList>
            <person name="Steiger M."/>
            <person name="Carr-Schmid A."/>
            <person name="Schwartz D.C."/>
            <person name="Kiledjian M."/>
            <person name="Parker R."/>
        </authorList>
    </citation>
    <scope>FUNCTION OF THE DCP1-DCP2 COMPLEX</scope>
</reference>
<reference key="25">
    <citation type="journal article" date="2003" name="Science">
        <title>Decapping and decay of messenger RNA occur in cytoplasmic processing bodies.</title>
        <authorList>
            <person name="Sheth U."/>
            <person name="Parker R."/>
        </authorList>
    </citation>
    <scope>SUBCELLULAR LOCATION</scope>
</reference>
<reference key="26">
    <citation type="journal article" date="2004" name="Mol. Cell. Biol.">
        <title>Loss of translational control in yeast compromised for the major mRNA decay pathway.</title>
        <authorList>
            <person name="Holmes L.E.A."/>
            <person name="Campbell S.G."/>
            <person name="De Long S.K."/>
            <person name="Sachs A.B."/>
            <person name="Ashe M.P."/>
        </authorList>
    </citation>
    <scope>FUNCTION</scope>
</reference>
<reference key="27">
    <citation type="journal article" date="2012" name="Proc. Natl. Acad. Sci. U.S.A.">
        <title>N-terminal acetylome analyses and functional insights of the N-terminal acetyltransferase NatB.</title>
        <authorList>
            <person name="Van Damme P."/>
            <person name="Lasa M."/>
            <person name="Polevoda B."/>
            <person name="Gazquez C."/>
            <person name="Elosegui-Artola A."/>
            <person name="Kim D.S."/>
            <person name="De Juan-Pardo E."/>
            <person name="Demeyer K."/>
            <person name="Hole K."/>
            <person name="Larrea E."/>
            <person name="Timmerman E."/>
            <person name="Prieto J."/>
            <person name="Arnesen T."/>
            <person name="Sherman F."/>
            <person name="Gevaert K."/>
            <person name="Aldabe R."/>
        </authorList>
    </citation>
    <scope>IDENTIFICATION BY MASS SPECTROMETRY [LARGE SCALE ANALYSIS]</scope>
</reference>
<reference key="28">
    <citation type="journal article" date="2004" name="Nat. Struct. Mol. Biol.">
        <title>Crystal structure of Dcp1p and its functional implications in mRNA decapping.</title>
        <authorList>
            <person name="She M."/>
            <person name="Decker C.J."/>
            <person name="Sundramurthy K."/>
            <person name="Liu Y."/>
            <person name="Chen N."/>
            <person name="Parker R."/>
            <person name="Song H."/>
        </authorList>
    </citation>
    <scope>X-RAY CRYSTALLOGRAPHY (2.3 ANGSTROMS)</scope>
    <scope>INTERACTION WITH DCP2</scope>
    <scope>MUTAGENESIS OF 29-ARG--ASP-31; 32-PRO--ILE-34; 37-LEU-LEU-38; TRP-56; ARG-70; LEU-217 AND LEU-221</scope>
</reference>
<feature type="chain" id="PRO_0000232998" description="mRNA-decapping enzyme subunit 1">
    <location>
        <begin position="1"/>
        <end position="231"/>
    </location>
</feature>
<feature type="region of interest" description="Disordered" evidence="1">
    <location>
        <begin position="92"/>
        <end position="120"/>
    </location>
</feature>
<feature type="compositionally biased region" description="Low complexity" evidence="1">
    <location>
        <begin position="101"/>
        <end position="120"/>
    </location>
</feature>
<feature type="mutagenesis site" description="In DCP1-17; partial loss of mRNA-decapping activity." evidence="3">
    <original>EFYRK</original>
    <variation>AFYAA</variation>
    <location>
        <begin position="16"/>
        <end position="20"/>
    </location>
</feature>
<feature type="mutagenesis site" description="In DCP1-2; strong loss of mRNA decapping activity at 36 degrees Celsius." evidence="3 19">
    <original>RYD</original>
    <variation>AYA</variation>
    <location>
        <begin position="29"/>
        <end position="31"/>
    </location>
</feature>
<feature type="mutagenesis site" description="Partial loss of mRNA-decapping activity." evidence="19">
    <original>PKI</original>
    <variation>AKA</variation>
    <location>
        <begin position="32"/>
        <end position="34"/>
    </location>
</feature>
<feature type="mutagenesis site" description="Strong loss of mRNA-decapping activity; when associated with A-217 and A-221." evidence="19">
    <original>LL</original>
    <variation>AA</variation>
    <location>
        <begin position="37"/>
        <end position="38"/>
    </location>
</feature>
<feature type="mutagenesis site" description="In DCP1-32; partial loss of mRNA decapping activity." evidence="3">
    <original>Y</original>
    <variation>A</variation>
    <location>
        <position position="47"/>
    </location>
</feature>
<feature type="mutagenesis site" description="In DCP1-35; partial loss of mRNA decapping activity." evidence="3">
    <original>Y</original>
    <variation>F</variation>
    <location>
        <position position="47"/>
    </location>
</feature>
<feature type="mutagenesis site" description="In DCP1-4; partial loss of mRNA decapping activity. In DCP1-43; strong loss of mRNA-decapping activity; when associated with A-187 and A-188. In DCP1-44; strong loss of mRNA-decapping activity; when associated with A-216 and A-219." evidence="3">
    <original>KWD</original>
    <variation>AWA</variation>
    <location>
        <begin position="48"/>
        <end position="50"/>
    </location>
</feature>
<feature type="mutagenesis site" description="In DCP1-31; partial loss of mRNA decapping activity." evidence="3 19 21">
    <original>W</original>
    <variation>A</variation>
    <location>
        <position position="56"/>
    </location>
</feature>
<feature type="mutagenesis site" description="In DCP1-33; strong loss of mRNA decapping activity." evidence="3 19">
    <original>R</original>
    <variation>A</variation>
    <location>
        <position position="70"/>
    </location>
</feature>
<feature type="mutagenesis site" description="In DCP1-1; strong loss of mRNA decapping activity." evidence="3">
    <original>G</original>
    <variation>D</variation>
    <location>
        <position position="156"/>
    </location>
</feature>
<feature type="mutagenesis site" description="In DCP1-19; partial loss of mRNA decapping activity. In DCP1-43; strong loss of mRNA-decapping activity; when associated with A-48 and A-50." evidence="3">
    <original>KD</original>
    <variation>AA</variation>
    <location>
        <begin position="187"/>
        <end position="188"/>
    </location>
</feature>
<feature type="mutagenesis site" description="In DCP1-33; partial loss of mRNA decapping activity." evidence="3">
    <original>W</original>
    <variation>A</variation>
    <location>
        <position position="204"/>
    </location>
</feature>
<feature type="mutagenesis site" description="In DCP1-25; partial loss of mRNA-decapping activity. In DCP1-44; strong loss of mRNA-decapping activity; when associated with A-48 and A-50." evidence="3">
    <original>ELIK</original>
    <variation>ALIA</variation>
    <location>
        <begin position="216"/>
        <end position="219"/>
    </location>
</feature>
<feature type="mutagenesis site" description="Strong loss of mRNA-decapping activity; when associated with A-37; A-38 and A-221." evidence="19">
    <original>L</original>
    <variation>A</variation>
    <location>
        <position position="217"/>
    </location>
</feature>
<feature type="mutagenesis site" description="Strong loss of mRNA-decapping activity; when associated with A-37; A-38 and A-217." evidence="19">
    <original>L</original>
    <variation>A</variation>
    <location>
        <position position="221"/>
    </location>
</feature>
<feature type="helix" evidence="27">
    <location>
        <begin position="15"/>
        <end position="22"/>
    </location>
</feature>
<feature type="helix" evidence="26">
    <location>
        <begin position="24"/>
        <end position="30"/>
    </location>
</feature>
<feature type="strand" evidence="26">
    <location>
        <begin position="34"/>
        <end position="50"/>
    </location>
</feature>
<feature type="turn" evidence="26">
    <location>
        <begin position="51"/>
        <end position="54"/>
    </location>
</feature>
<feature type="strand" evidence="26">
    <location>
        <begin position="55"/>
        <end position="70"/>
    </location>
</feature>
<feature type="strand" evidence="26">
    <location>
        <begin position="139"/>
        <end position="150"/>
    </location>
</feature>
<feature type="strand" evidence="26">
    <location>
        <begin position="152"/>
        <end position="157"/>
    </location>
</feature>
<feature type="helix" evidence="26">
    <location>
        <begin position="160"/>
        <end position="169"/>
    </location>
</feature>
<feature type="helix" evidence="26">
    <location>
        <begin position="171"/>
        <end position="176"/>
    </location>
</feature>
<feature type="strand" evidence="26">
    <location>
        <begin position="183"/>
        <end position="187"/>
    </location>
</feature>
<feature type="strand" evidence="26">
    <location>
        <begin position="190"/>
        <end position="194"/>
    </location>
</feature>
<feature type="strand" evidence="26">
    <location>
        <begin position="200"/>
        <end position="207"/>
    </location>
</feature>
<feature type="helix" evidence="26">
    <location>
        <begin position="208"/>
        <end position="223"/>
    </location>
</feature>
<accession>Q12517</accession>
<accession>D6W1S0</accession>
<keyword id="KW-0002">3D-structure</keyword>
<keyword id="KW-0963">Cytoplasm</keyword>
<keyword id="KW-0903">Direct protein sequencing</keyword>
<keyword id="KW-0507">mRNA processing</keyword>
<keyword id="KW-0866">Nonsense-mediated mRNA decay</keyword>
<keyword id="KW-0597">Phosphoprotein</keyword>
<keyword id="KW-1185">Reference proteome</keyword>
<keyword id="KW-0694">RNA-binding</keyword>
<comment type="function">
    <text evidence="2 3 4 5 6 9 10 11 13 14 15 20 21 22 23 24">Component of the decapping complex necessary for the degradation of mRNAs, both in normal mRNA turnover and in nonsense-mediated mRNA decay. Removes the 7-methyl guanine cap structure from mRNA molecules, yielding a 5'-phosphorylated mRNA fragment and 7m-GDP. Decapping is the major pathway of mRNA degradation in yeast. It occurs through deadenylation, decapping and subsequent 5' to 3' exonucleolytic decay of the transcript body. DCP1 is activated by the DEAD-box helicase DHH1 and destabilizes the eIF-4F cap-binding complex from the mRNA.</text>
</comment>
<comment type="subunit">
    <text evidence="5 7 8 9 10 11 12 19">Component of the decapping complex composed of DCP1 and DCP2. Interacts with mRNAs, DHH1, LSM1, LSM2, LSM3, LSM4, LSM5, LSM6, LSM7, and the cap-binding proteins PAB1 and TIF4632/eIF-4G.</text>
</comment>
<comment type="interaction">
    <interactant intactId="EBI-38519">
        <id>Q12517</id>
    </interactant>
    <interactant intactId="EBI-270">
        <id>P53550</id>
        <label>DCP2</label>
    </interactant>
    <organismsDiffer>false</organismsDiffer>
    <experiments>6</experiments>
</comment>
<comment type="interaction">
    <interactant intactId="EBI-38519">
        <id>Q12517</id>
    </interactant>
    <interactant intactId="EBI-158">
        <id>P39517</id>
        <label>DHH1</label>
    </interactant>
    <organismsDiffer>false</organismsDiffer>
    <experiments>3</experiments>
</comment>
<comment type="interaction">
    <interactant intactId="EBI-38519">
        <id>Q12517</id>
    </interactant>
    <interactant intactId="EBI-22300">
        <id>P39998</id>
        <label>EDC3</label>
    </interactant>
    <organismsDiffer>false</organismsDiffer>
    <experiments>5</experiments>
</comment>
<comment type="interaction">
    <interactant intactId="EBI-38519">
        <id>Q12517</id>
    </interactant>
    <interactant intactId="EBI-3386960">
        <id>F4HZB2</id>
        <label>SPI</label>
    </interactant>
    <organismsDiffer>true</organismsDiffer>
    <experiments>2</experiments>
</comment>
<comment type="subcellular location">
    <subcellularLocation>
        <location evidence="7 16 17">Cytoplasm</location>
        <location evidence="7 16 17">P-body</location>
    </subcellularLocation>
    <text>Is concentrated in several cytoplasmic foci called P bodies (or cytoplasmic processing bodies) which represent sites of mRNA decapping and 5' to 3' exonucleotidic decay.</text>
</comment>
<comment type="PTM">
    <text evidence="23">Phosphorylated.</text>
</comment>
<comment type="miscellaneous">
    <text evidence="18">Present with 2880 molecules/cell in log phase SD medium.</text>
</comment>
<comment type="similarity">
    <text evidence="25">Belongs to the DCP1 family.</text>
</comment>
<name>DCP1_YEAST</name>
<dbReference type="EMBL" id="Z48239">
    <property type="protein sequence ID" value="CAA88278.1"/>
    <property type="molecule type" value="Genomic_DNA"/>
</dbReference>
<dbReference type="EMBL" id="Z74891">
    <property type="protein sequence ID" value="CAA99170.1"/>
    <property type="molecule type" value="Genomic_DNA"/>
</dbReference>
<dbReference type="EMBL" id="AY558431">
    <property type="protein sequence ID" value="AAS56757.1"/>
    <property type="molecule type" value="Genomic_DNA"/>
</dbReference>
<dbReference type="EMBL" id="BK006948">
    <property type="protein sequence ID" value="DAA10636.1"/>
    <property type="molecule type" value="Genomic_DNA"/>
</dbReference>
<dbReference type="PIR" id="S60387">
    <property type="entry name" value="S60387"/>
</dbReference>
<dbReference type="RefSeq" id="NP_014492.1">
    <property type="nucleotide sequence ID" value="NM_001183403.1"/>
</dbReference>
<dbReference type="PDB" id="1Q67">
    <property type="method" value="X-ray"/>
    <property type="resolution" value="2.30 A"/>
    <property type="chains" value="A/B=1-231"/>
</dbReference>
<dbReference type="PDB" id="6Y3Z">
    <property type="method" value="X-ray"/>
    <property type="resolution" value="3.49 A"/>
    <property type="chains" value="B=1-231"/>
</dbReference>
<dbReference type="PDBsum" id="1Q67"/>
<dbReference type="PDBsum" id="6Y3Z"/>
<dbReference type="SMR" id="Q12517"/>
<dbReference type="BioGRID" id="34268">
    <property type="interactions" value="417"/>
</dbReference>
<dbReference type="ComplexPortal" id="CPX-1628">
    <property type="entry name" value="RNA decapping complex, DCP1-DCP2"/>
</dbReference>
<dbReference type="DIP" id="DIP-1288N"/>
<dbReference type="FunCoup" id="Q12517">
    <property type="interactions" value="208"/>
</dbReference>
<dbReference type="IntAct" id="Q12517">
    <property type="interactions" value="26"/>
</dbReference>
<dbReference type="MINT" id="Q12517"/>
<dbReference type="STRING" id="4932.YOL149W"/>
<dbReference type="iPTMnet" id="Q12517"/>
<dbReference type="PaxDb" id="4932-YOL149W"/>
<dbReference type="PeptideAtlas" id="Q12517"/>
<dbReference type="EnsemblFungi" id="YOL149W_mRNA">
    <property type="protein sequence ID" value="YOL149W"/>
    <property type="gene ID" value="YOL149W"/>
</dbReference>
<dbReference type="GeneID" id="854016"/>
<dbReference type="KEGG" id="sce:YOL149W"/>
<dbReference type="AGR" id="SGD:S000005509"/>
<dbReference type="SGD" id="S000005509">
    <property type="gene designation" value="DCP1"/>
</dbReference>
<dbReference type="VEuPathDB" id="FungiDB:YOL149W"/>
<dbReference type="eggNOG" id="KOG2868">
    <property type="taxonomic scope" value="Eukaryota"/>
</dbReference>
<dbReference type="HOGENOM" id="CLU_113008_0_0_1"/>
<dbReference type="InParanoid" id="Q12517"/>
<dbReference type="OMA" id="IWIHTVA"/>
<dbReference type="OrthoDB" id="440673at2759"/>
<dbReference type="BioCyc" id="YEAST:G3O-33539-MONOMER"/>
<dbReference type="Reactome" id="R-SCE-430039">
    <property type="pathway name" value="mRNA decay by 5' to 3' exoribonuclease"/>
</dbReference>
<dbReference type="Reactome" id="R-SCE-450385">
    <property type="pathway name" value="Butyrate Response Factor 1 (BRF1) binds and destabilizes mRNA"/>
</dbReference>
<dbReference type="Reactome" id="R-SCE-450513">
    <property type="pathway name" value="Tristetraprolin (TTP, ZFP36) binds and destabilizes mRNA"/>
</dbReference>
<dbReference type="BioGRID-ORCS" id="854016">
    <property type="hits" value="0 hits in 10 CRISPR screens"/>
</dbReference>
<dbReference type="CD-CODE" id="A777E0F8">
    <property type="entry name" value="P-body"/>
</dbReference>
<dbReference type="CD-CODE" id="E7338DBF">
    <property type="entry name" value="Synthetic Condensate 000343"/>
</dbReference>
<dbReference type="EvolutionaryTrace" id="Q12517"/>
<dbReference type="PRO" id="PR:Q12517"/>
<dbReference type="Proteomes" id="UP000002311">
    <property type="component" value="Chromosome XV"/>
</dbReference>
<dbReference type="RNAct" id="Q12517">
    <property type="molecule type" value="protein"/>
</dbReference>
<dbReference type="GO" id="GO:0005737">
    <property type="term" value="C:cytoplasm"/>
    <property type="evidence" value="ECO:0000314"/>
    <property type="project" value="SGD"/>
</dbReference>
<dbReference type="GO" id="GO:0098562">
    <property type="term" value="C:cytoplasmic side of membrane"/>
    <property type="evidence" value="ECO:0000314"/>
    <property type="project" value="SGD"/>
</dbReference>
<dbReference type="GO" id="GO:0005634">
    <property type="term" value="C:nucleus"/>
    <property type="evidence" value="ECO:0000314"/>
    <property type="project" value="SGD"/>
</dbReference>
<dbReference type="GO" id="GO:0000932">
    <property type="term" value="C:P-body"/>
    <property type="evidence" value="ECO:0000314"/>
    <property type="project" value="SGD"/>
</dbReference>
<dbReference type="GO" id="GO:0098745">
    <property type="term" value="C:RNA decapping complex"/>
    <property type="evidence" value="ECO:0000314"/>
    <property type="project" value="SGD"/>
</dbReference>
<dbReference type="GO" id="GO:0008047">
    <property type="term" value="F:enzyme activator activity"/>
    <property type="evidence" value="ECO:0000314"/>
    <property type="project" value="SGD"/>
</dbReference>
<dbReference type="GO" id="GO:0003729">
    <property type="term" value="F:mRNA binding"/>
    <property type="evidence" value="ECO:0000314"/>
    <property type="project" value="SGD"/>
</dbReference>
<dbReference type="GO" id="GO:0000290">
    <property type="term" value="P:deadenylation-dependent decapping of nuclear-transcribed mRNA"/>
    <property type="evidence" value="ECO:0000314"/>
    <property type="project" value="SGD"/>
</dbReference>
<dbReference type="GO" id="GO:0031087">
    <property type="term" value="P:deadenylation-independent decapping of nuclear-transcribed mRNA"/>
    <property type="evidence" value="ECO:0000318"/>
    <property type="project" value="GO_Central"/>
</dbReference>
<dbReference type="GO" id="GO:0006397">
    <property type="term" value="P:mRNA processing"/>
    <property type="evidence" value="ECO:0007669"/>
    <property type="project" value="UniProtKB-KW"/>
</dbReference>
<dbReference type="GO" id="GO:0000184">
    <property type="term" value="P:nuclear-transcribed mRNA catabolic process, nonsense-mediated decay"/>
    <property type="evidence" value="ECO:0000303"/>
    <property type="project" value="ComplexPortal"/>
</dbReference>
<dbReference type="CDD" id="cd09804">
    <property type="entry name" value="Dcp1"/>
    <property type="match status" value="1"/>
</dbReference>
<dbReference type="Gene3D" id="2.30.29.30">
    <property type="entry name" value="Pleckstrin-homology domain (PH domain)/Phosphotyrosine-binding domain (PTB)"/>
    <property type="match status" value="1"/>
</dbReference>
<dbReference type="InterPro" id="IPR010334">
    <property type="entry name" value="Dcp1"/>
</dbReference>
<dbReference type="InterPro" id="IPR011993">
    <property type="entry name" value="PH-like_dom_sf"/>
</dbReference>
<dbReference type="PANTHER" id="PTHR16290:SF0">
    <property type="entry name" value="DECAPPING PROTEIN 1, ISOFORM A"/>
    <property type="match status" value="1"/>
</dbReference>
<dbReference type="PANTHER" id="PTHR16290">
    <property type="entry name" value="TRANSCRIPTION FACTOR SMIF DECAPPING ENZYME DCP1"/>
    <property type="match status" value="1"/>
</dbReference>
<dbReference type="Pfam" id="PF06058">
    <property type="entry name" value="DCP1"/>
    <property type="match status" value="2"/>
</dbReference>
<dbReference type="SUPFAM" id="SSF50729">
    <property type="entry name" value="PH domain-like"/>
    <property type="match status" value="1"/>
</dbReference>
<organism>
    <name type="scientific">Saccharomyces cerevisiae (strain ATCC 204508 / S288c)</name>
    <name type="common">Baker's yeast</name>
    <dbReference type="NCBI Taxonomy" id="559292"/>
    <lineage>
        <taxon>Eukaryota</taxon>
        <taxon>Fungi</taxon>
        <taxon>Dikarya</taxon>
        <taxon>Ascomycota</taxon>
        <taxon>Saccharomycotina</taxon>
        <taxon>Saccharomycetes</taxon>
        <taxon>Saccharomycetales</taxon>
        <taxon>Saccharomycetaceae</taxon>
        <taxon>Saccharomyces</taxon>
    </lineage>
</organism>
<gene>
    <name type="primary">DCP1</name>
    <name type="ordered locus">YOL149W</name>
</gene>
<sequence length="231" mass="26266">MTGAATAAENSATQLEFYRKALNFNVIGRYDPKIKQLLFHTPHASLYKWDFKKDEWNKLEYQGVLAIYLRDVSQNTNLLPVSPQEVDIFDSQNGSNNIQVNNGSDNSNRNSSGNGNSYKSNDSLTYNCGKTLSGKDIYNYGLIILNRINPDNFSMGIVPNSVVNKRKVFNAEEDTLNPLECMGVEVKDELVIIKNLKHEVYGIWIHTVSDRQNIYELIKYLLENEPKDSFA</sequence>
<protein>
    <recommendedName>
        <fullName>mRNA-decapping enzyme subunit 1</fullName>
    </recommendedName>
</protein>